<dbReference type="EMBL" id="CU928164">
    <property type="protein sequence ID" value="CAR19095.1"/>
    <property type="molecule type" value="Genomic_DNA"/>
</dbReference>
<dbReference type="RefSeq" id="WP_000130691.1">
    <property type="nucleotide sequence ID" value="NC_011750.1"/>
</dbReference>
<dbReference type="RefSeq" id="YP_002408904.1">
    <property type="nucleotide sequence ID" value="NC_011750.1"/>
</dbReference>
<dbReference type="SMR" id="B7NTD1"/>
<dbReference type="STRING" id="585057.ECIAI39_2976"/>
<dbReference type="GeneID" id="75059707"/>
<dbReference type="KEGG" id="ect:ECIAI39_2976"/>
<dbReference type="PATRIC" id="fig|585057.6.peg.3087"/>
<dbReference type="HOGENOM" id="CLU_027562_9_0_6"/>
<dbReference type="Proteomes" id="UP000000749">
    <property type="component" value="Chromosome"/>
</dbReference>
<dbReference type="GO" id="GO:0005737">
    <property type="term" value="C:cytoplasm"/>
    <property type="evidence" value="ECO:0007669"/>
    <property type="project" value="UniProtKB-SubCell"/>
</dbReference>
<dbReference type="GO" id="GO:0003677">
    <property type="term" value="F:DNA binding"/>
    <property type="evidence" value="ECO:0007669"/>
    <property type="project" value="UniProtKB-KW"/>
</dbReference>
<dbReference type="GO" id="GO:0009037">
    <property type="term" value="F:tyrosine-based site-specific recombinase activity"/>
    <property type="evidence" value="ECO:0007669"/>
    <property type="project" value="UniProtKB-UniRule"/>
</dbReference>
<dbReference type="GO" id="GO:0051301">
    <property type="term" value="P:cell division"/>
    <property type="evidence" value="ECO:0007669"/>
    <property type="project" value="UniProtKB-KW"/>
</dbReference>
<dbReference type="GO" id="GO:0007059">
    <property type="term" value="P:chromosome segregation"/>
    <property type="evidence" value="ECO:0007669"/>
    <property type="project" value="UniProtKB-UniRule"/>
</dbReference>
<dbReference type="GO" id="GO:0006313">
    <property type="term" value="P:DNA transposition"/>
    <property type="evidence" value="ECO:0007669"/>
    <property type="project" value="UniProtKB-UniRule"/>
</dbReference>
<dbReference type="CDD" id="cd00798">
    <property type="entry name" value="INT_XerDC_C"/>
    <property type="match status" value="1"/>
</dbReference>
<dbReference type="FunFam" id="1.10.443.10:FF:000002">
    <property type="entry name" value="Tyrosine recombinase XerC"/>
    <property type="match status" value="1"/>
</dbReference>
<dbReference type="Gene3D" id="1.10.150.130">
    <property type="match status" value="1"/>
</dbReference>
<dbReference type="Gene3D" id="1.10.443.10">
    <property type="entry name" value="Intergrase catalytic core"/>
    <property type="match status" value="1"/>
</dbReference>
<dbReference type="HAMAP" id="MF_01808">
    <property type="entry name" value="Recomb_XerC_XerD"/>
    <property type="match status" value="1"/>
</dbReference>
<dbReference type="InterPro" id="IPR044068">
    <property type="entry name" value="CB"/>
</dbReference>
<dbReference type="InterPro" id="IPR011010">
    <property type="entry name" value="DNA_brk_join_enz"/>
</dbReference>
<dbReference type="InterPro" id="IPR013762">
    <property type="entry name" value="Integrase-like_cat_sf"/>
</dbReference>
<dbReference type="InterPro" id="IPR002104">
    <property type="entry name" value="Integrase_catalytic"/>
</dbReference>
<dbReference type="InterPro" id="IPR010998">
    <property type="entry name" value="Integrase_recombinase_N"/>
</dbReference>
<dbReference type="InterPro" id="IPR004107">
    <property type="entry name" value="Integrase_SAM-like_N"/>
</dbReference>
<dbReference type="InterPro" id="IPR011931">
    <property type="entry name" value="Recomb_XerC"/>
</dbReference>
<dbReference type="InterPro" id="IPR023009">
    <property type="entry name" value="Tyrosine_recombinase_XerC/XerD"/>
</dbReference>
<dbReference type="InterPro" id="IPR050090">
    <property type="entry name" value="Tyrosine_recombinase_XerCD"/>
</dbReference>
<dbReference type="NCBIfam" id="NF001399">
    <property type="entry name" value="PRK00283.1"/>
    <property type="match status" value="1"/>
</dbReference>
<dbReference type="NCBIfam" id="TIGR02224">
    <property type="entry name" value="recomb_XerC"/>
    <property type="match status" value="1"/>
</dbReference>
<dbReference type="PANTHER" id="PTHR30349">
    <property type="entry name" value="PHAGE INTEGRASE-RELATED"/>
    <property type="match status" value="1"/>
</dbReference>
<dbReference type="PANTHER" id="PTHR30349:SF81">
    <property type="entry name" value="TYROSINE RECOMBINASE XERC"/>
    <property type="match status" value="1"/>
</dbReference>
<dbReference type="Pfam" id="PF02899">
    <property type="entry name" value="Phage_int_SAM_1"/>
    <property type="match status" value="1"/>
</dbReference>
<dbReference type="Pfam" id="PF00589">
    <property type="entry name" value="Phage_integrase"/>
    <property type="match status" value="1"/>
</dbReference>
<dbReference type="SUPFAM" id="SSF56349">
    <property type="entry name" value="DNA breaking-rejoining enzymes"/>
    <property type="match status" value="1"/>
</dbReference>
<dbReference type="SUPFAM" id="SSF47823">
    <property type="entry name" value="lambda integrase-like, N-terminal domain"/>
    <property type="match status" value="1"/>
</dbReference>
<dbReference type="PROSITE" id="PS51900">
    <property type="entry name" value="CB"/>
    <property type="match status" value="1"/>
</dbReference>
<dbReference type="PROSITE" id="PS51898">
    <property type="entry name" value="TYR_RECOMBINASE"/>
    <property type="match status" value="1"/>
</dbReference>
<sequence length="298" mass="33868">MTDLHTDVERYLRYLSVERQLSPITLLNYQRQLEAIINFASENGLQSWQQCDVTMVRNFAVRSRRKGLGAASLALRLSALRSFFDWLVSQNELKANPAKGVSAPKAPRHLPKNIDVDDMNRLLDIDINDPLAVRDRAMLEVMYGAGLRLSELVGLDIKHLDLESGEVWVMGKGSKERRLPIGRNAVAWIEHWLDLRDLFGSEDDALFLSKLGKRISARNVQKRFAEWGIKQGLNNHVHPHKLRHSFATHMLESSGDLRGVQELLGHANLSTTQIYTHLDFQHLASVYDAAHPRAKRGK</sequence>
<accession>B7NTD1</accession>
<feature type="chain" id="PRO_1000187591" description="Tyrosine recombinase XerC">
    <location>
        <begin position="1"/>
        <end position="298"/>
    </location>
</feature>
<feature type="domain" description="Core-binding (CB)" evidence="3">
    <location>
        <begin position="2"/>
        <end position="88"/>
    </location>
</feature>
<feature type="domain" description="Tyr recombinase" evidence="2">
    <location>
        <begin position="109"/>
        <end position="288"/>
    </location>
</feature>
<feature type="active site" evidence="1">
    <location>
        <position position="148"/>
    </location>
</feature>
<feature type="active site" evidence="1">
    <location>
        <position position="172"/>
    </location>
</feature>
<feature type="active site" evidence="1">
    <location>
        <position position="240"/>
    </location>
</feature>
<feature type="active site" evidence="1">
    <location>
        <position position="243"/>
    </location>
</feature>
<feature type="active site" evidence="1">
    <location>
        <position position="266"/>
    </location>
</feature>
<feature type="active site" description="O-(3'-phospho-DNA)-tyrosine intermediate" evidence="1">
    <location>
        <position position="275"/>
    </location>
</feature>
<proteinExistence type="inferred from homology"/>
<name>XERC_ECO7I</name>
<gene>
    <name evidence="1" type="primary">xerC</name>
    <name type="ordered locus">ECIAI39_2976</name>
</gene>
<protein>
    <recommendedName>
        <fullName evidence="1">Tyrosine recombinase XerC</fullName>
    </recommendedName>
</protein>
<organism>
    <name type="scientific">Escherichia coli O7:K1 (strain IAI39 / ExPEC)</name>
    <dbReference type="NCBI Taxonomy" id="585057"/>
    <lineage>
        <taxon>Bacteria</taxon>
        <taxon>Pseudomonadati</taxon>
        <taxon>Pseudomonadota</taxon>
        <taxon>Gammaproteobacteria</taxon>
        <taxon>Enterobacterales</taxon>
        <taxon>Enterobacteriaceae</taxon>
        <taxon>Escherichia</taxon>
    </lineage>
</organism>
<evidence type="ECO:0000255" key="1">
    <source>
        <dbReference type="HAMAP-Rule" id="MF_01808"/>
    </source>
</evidence>
<evidence type="ECO:0000255" key="2">
    <source>
        <dbReference type="PROSITE-ProRule" id="PRU01246"/>
    </source>
</evidence>
<evidence type="ECO:0000255" key="3">
    <source>
        <dbReference type="PROSITE-ProRule" id="PRU01248"/>
    </source>
</evidence>
<keyword id="KW-0131">Cell cycle</keyword>
<keyword id="KW-0132">Cell division</keyword>
<keyword id="KW-0159">Chromosome partition</keyword>
<keyword id="KW-0963">Cytoplasm</keyword>
<keyword id="KW-0229">DNA integration</keyword>
<keyword id="KW-0233">DNA recombination</keyword>
<keyword id="KW-0238">DNA-binding</keyword>
<comment type="function">
    <text evidence="1">Site-specific tyrosine recombinase, which acts by catalyzing the cutting and rejoining of the recombining DNA molecules. Binds cooperatively to specific DNA consensus sequences that are separated from XerD binding sites by a short central region, forming the heterotetrameric XerC-XerD complex that recombines DNA substrates. The complex is essential to convert dimers of the bacterial chromosome into monomers to permit their segregation at cell division. It also contributes to the segregational stability of plasmids. In the complex XerC specifically exchanges the top DNA strands.</text>
</comment>
<comment type="activity regulation">
    <text evidence="1">FtsK may regulate the catalytic switch between XerC and XerD in the heterotetrameric complex during the two steps of the recombination process.</text>
</comment>
<comment type="subunit">
    <text evidence="1">Forms a cyclic heterotetrameric complex composed of two molecules of XerC and two molecules of XerD, in which XerC interacts with XerD via its C-terminal region, XerD interacts with XerC via its C-terminal region and so on.</text>
</comment>
<comment type="subcellular location">
    <subcellularLocation>
        <location evidence="1">Cytoplasm</location>
    </subcellularLocation>
</comment>
<comment type="similarity">
    <text evidence="1">Belongs to the 'phage' integrase family. XerC subfamily.</text>
</comment>
<reference key="1">
    <citation type="journal article" date="2009" name="PLoS Genet.">
        <title>Organised genome dynamics in the Escherichia coli species results in highly diverse adaptive paths.</title>
        <authorList>
            <person name="Touchon M."/>
            <person name="Hoede C."/>
            <person name="Tenaillon O."/>
            <person name="Barbe V."/>
            <person name="Baeriswyl S."/>
            <person name="Bidet P."/>
            <person name="Bingen E."/>
            <person name="Bonacorsi S."/>
            <person name="Bouchier C."/>
            <person name="Bouvet O."/>
            <person name="Calteau A."/>
            <person name="Chiapello H."/>
            <person name="Clermont O."/>
            <person name="Cruveiller S."/>
            <person name="Danchin A."/>
            <person name="Diard M."/>
            <person name="Dossat C."/>
            <person name="Karoui M.E."/>
            <person name="Frapy E."/>
            <person name="Garry L."/>
            <person name="Ghigo J.M."/>
            <person name="Gilles A.M."/>
            <person name="Johnson J."/>
            <person name="Le Bouguenec C."/>
            <person name="Lescat M."/>
            <person name="Mangenot S."/>
            <person name="Martinez-Jehanne V."/>
            <person name="Matic I."/>
            <person name="Nassif X."/>
            <person name="Oztas S."/>
            <person name="Petit M.A."/>
            <person name="Pichon C."/>
            <person name="Rouy Z."/>
            <person name="Ruf C.S."/>
            <person name="Schneider D."/>
            <person name="Tourret J."/>
            <person name="Vacherie B."/>
            <person name="Vallenet D."/>
            <person name="Medigue C."/>
            <person name="Rocha E.P.C."/>
            <person name="Denamur E."/>
        </authorList>
    </citation>
    <scope>NUCLEOTIDE SEQUENCE [LARGE SCALE GENOMIC DNA]</scope>
    <source>
        <strain>IAI39 / ExPEC</strain>
    </source>
</reference>